<sequence length="580" mass="64685">MTNHEQVLTDYLAAFIEELVQAGVKEAIISPGSRSTPLALMMAEHPILKIYVDVDERSAGFFALGLAKASKRPVVLLCTSGTAAANYFPAVAEANLSQIPLIVLTADRPHELRNVGAPQAMDQLHLYGSHVKDFTDMALPENSEEMLRYAKWHGSRAVDIAMKTPRGPVHLNFPLREPLVPILEPSPFTATGKKHHHVHIYYTHEVLDDSSIQKMVTECTGKKGVFVVGPIDKKELEQPMVDLAKKLGWPILADPLSGLRSYGALDEVVIDQYDAFLKEAEIMDKLTPEVVIRFGSMPVSKPLKNWLEQLSDIRFYVVDPGAAWKDPIKAVTDMIHCDERFLLDIMQQNMPDDAKDAAWLSRWTSYNKVAREIVLAEMANTTILEEGKIVAELRRLLPEKAGLFIGNSMPIRDVDTYFSQIDKKIKMLANRGANGIDGVVSSALGASVVFQPMFLLIGDLSFYHDMNGLLMAKKYKMNLTIVIVNNDGGGIFSFLPQANEPKYFESLFGTSTELDFRFAAAFYDADYHETQSVDELEEAIDKASYHKGLDIIEVKTNRHENKANHQALWAKIADALKALN</sequence>
<dbReference type="EC" id="2.2.1.9" evidence="1"/>
<dbReference type="EMBL" id="AL591980">
    <property type="protein sequence ID" value="CAC99753.1"/>
    <property type="molecule type" value="Genomic_DNA"/>
</dbReference>
<dbReference type="PIR" id="AC1284">
    <property type="entry name" value="AC1284"/>
</dbReference>
<dbReference type="RefSeq" id="NP_465200.1">
    <property type="nucleotide sequence ID" value="NC_003210.1"/>
</dbReference>
<dbReference type="RefSeq" id="WP_010989780.1">
    <property type="nucleotide sequence ID" value="NZ_CP149495.1"/>
</dbReference>
<dbReference type="SMR" id="Q8Y6K9"/>
<dbReference type="STRING" id="169963.gene:17594332"/>
<dbReference type="PaxDb" id="169963-lmo1675"/>
<dbReference type="EnsemblBacteria" id="CAC99753">
    <property type="protein sequence ID" value="CAC99753"/>
    <property type="gene ID" value="CAC99753"/>
</dbReference>
<dbReference type="GeneID" id="985654"/>
<dbReference type="KEGG" id="lmo:lmo1675"/>
<dbReference type="PATRIC" id="fig|169963.11.peg.1718"/>
<dbReference type="eggNOG" id="COG1165">
    <property type="taxonomic scope" value="Bacteria"/>
</dbReference>
<dbReference type="HOGENOM" id="CLU_006051_3_0_9"/>
<dbReference type="OrthoDB" id="9791859at2"/>
<dbReference type="PhylomeDB" id="Q8Y6K9"/>
<dbReference type="BioCyc" id="LMON169963:LMO1675-MONOMER"/>
<dbReference type="UniPathway" id="UPA00079"/>
<dbReference type="UniPathway" id="UPA01057">
    <property type="reaction ID" value="UER00164"/>
</dbReference>
<dbReference type="Proteomes" id="UP000000817">
    <property type="component" value="Chromosome"/>
</dbReference>
<dbReference type="GO" id="GO:0070204">
    <property type="term" value="F:2-succinyl-5-enolpyruvyl-6-hydroxy-3-cyclohexene-1-carboxylic-acid synthase activity"/>
    <property type="evidence" value="ECO:0007669"/>
    <property type="project" value="UniProtKB-UniRule"/>
</dbReference>
<dbReference type="GO" id="GO:0000287">
    <property type="term" value="F:magnesium ion binding"/>
    <property type="evidence" value="ECO:0007669"/>
    <property type="project" value="UniProtKB-UniRule"/>
</dbReference>
<dbReference type="GO" id="GO:0030145">
    <property type="term" value="F:manganese ion binding"/>
    <property type="evidence" value="ECO:0007669"/>
    <property type="project" value="UniProtKB-UniRule"/>
</dbReference>
<dbReference type="GO" id="GO:0030976">
    <property type="term" value="F:thiamine pyrophosphate binding"/>
    <property type="evidence" value="ECO:0007669"/>
    <property type="project" value="UniProtKB-UniRule"/>
</dbReference>
<dbReference type="GO" id="GO:0009234">
    <property type="term" value="P:menaquinone biosynthetic process"/>
    <property type="evidence" value="ECO:0007669"/>
    <property type="project" value="UniProtKB-UniRule"/>
</dbReference>
<dbReference type="CDD" id="cd07037">
    <property type="entry name" value="TPP_PYR_MenD"/>
    <property type="match status" value="1"/>
</dbReference>
<dbReference type="CDD" id="cd02009">
    <property type="entry name" value="TPP_SHCHC_synthase"/>
    <property type="match status" value="1"/>
</dbReference>
<dbReference type="Gene3D" id="3.40.50.970">
    <property type="match status" value="2"/>
</dbReference>
<dbReference type="Gene3D" id="3.40.50.1220">
    <property type="entry name" value="TPP-binding domain"/>
    <property type="match status" value="1"/>
</dbReference>
<dbReference type="HAMAP" id="MF_01659">
    <property type="entry name" value="MenD"/>
    <property type="match status" value="1"/>
</dbReference>
<dbReference type="InterPro" id="IPR029035">
    <property type="entry name" value="DHS-like_NAD/FAD-binding_dom"/>
</dbReference>
<dbReference type="InterPro" id="IPR004433">
    <property type="entry name" value="MenaQ_synth_MenD"/>
</dbReference>
<dbReference type="InterPro" id="IPR032264">
    <property type="entry name" value="MenD_middle"/>
</dbReference>
<dbReference type="InterPro" id="IPR029061">
    <property type="entry name" value="THDP-binding"/>
</dbReference>
<dbReference type="InterPro" id="IPR012001">
    <property type="entry name" value="Thiamin_PyroP_enz_TPP-bd_dom"/>
</dbReference>
<dbReference type="InterPro" id="IPR011766">
    <property type="entry name" value="TPP_enzyme_TPP-bd"/>
</dbReference>
<dbReference type="NCBIfam" id="TIGR00173">
    <property type="entry name" value="menD"/>
    <property type="match status" value="1"/>
</dbReference>
<dbReference type="PANTHER" id="PTHR42916">
    <property type="entry name" value="2-SUCCINYL-5-ENOLPYRUVYL-6-HYDROXY-3-CYCLOHEXENE-1-CARBOXYLATE SYNTHASE"/>
    <property type="match status" value="1"/>
</dbReference>
<dbReference type="PANTHER" id="PTHR42916:SF1">
    <property type="entry name" value="PROTEIN PHYLLO, CHLOROPLASTIC"/>
    <property type="match status" value="1"/>
</dbReference>
<dbReference type="Pfam" id="PF02775">
    <property type="entry name" value="TPP_enzyme_C"/>
    <property type="match status" value="1"/>
</dbReference>
<dbReference type="Pfam" id="PF16582">
    <property type="entry name" value="TPP_enzyme_M_2"/>
    <property type="match status" value="1"/>
</dbReference>
<dbReference type="Pfam" id="PF02776">
    <property type="entry name" value="TPP_enzyme_N"/>
    <property type="match status" value="1"/>
</dbReference>
<dbReference type="PIRSF" id="PIRSF004983">
    <property type="entry name" value="MenD"/>
    <property type="match status" value="1"/>
</dbReference>
<dbReference type="SUPFAM" id="SSF52467">
    <property type="entry name" value="DHS-like NAD/FAD-binding domain"/>
    <property type="match status" value="1"/>
</dbReference>
<dbReference type="SUPFAM" id="SSF52518">
    <property type="entry name" value="Thiamin diphosphate-binding fold (THDP-binding)"/>
    <property type="match status" value="2"/>
</dbReference>
<comment type="function">
    <text evidence="1">Catalyzes the thiamine diphosphate-dependent decarboxylation of 2-oxoglutarate and the subsequent addition of the resulting succinic semialdehyde-thiamine pyrophosphate anion to isochorismate to yield 2-succinyl-5-enolpyruvyl-6-hydroxy-3-cyclohexene-1-carboxylate (SEPHCHC).</text>
</comment>
<comment type="catalytic activity">
    <reaction evidence="1">
        <text>isochorismate + 2-oxoglutarate + H(+) = 5-enolpyruvoyl-6-hydroxy-2-succinyl-cyclohex-3-ene-1-carboxylate + CO2</text>
        <dbReference type="Rhea" id="RHEA:25593"/>
        <dbReference type="ChEBI" id="CHEBI:15378"/>
        <dbReference type="ChEBI" id="CHEBI:16526"/>
        <dbReference type="ChEBI" id="CHEBI:16810"/>
        <dbReference type="ChEBI" id="CHEBI:29780"/>
        <dbReference type="ChEBI" id="CHEBI:58818"/>
        <dbReference type="EC" id="2.2.1.9"/>
    </reaction>
</comment>
<comment type="cofactor">
    <cofactor evidence="1">
        <name>Mg(2+)</name>
        <dbReference type="ChEBI" id="CHEBI:18420"/>
    </cofactor>
    <cofactor evidence="1">
        <name>Mn(2+)</name>
        <dbReference type="ChEBI" id="CHEBI:29035"/>
    </cofactor>
</comment>
<comment type="cofactor">
    <cofactor evidence="1">
        <name>thiamine diphosphate</name>
        <dbReference type="ChEBI" id="CHEBI:58937"/>
    </cofactor>
    <text evidence="1">Binds 1 thiamine pyrophosphate per subunit.</text>
</comment>
<comment type="pathway">
    <text evidence="1">Quinol/quinone metabolism; 1,4-dihydroxy-2-naphthoate biosynthesis; 1,4-dihydroxy-2-naphthoate from chorismate: step 2/7.</text>
</comment>
<comment type="pathway">
    <text evidence="1">Quinol/quinone metabolism; menaquinone biosynthesis.</text>
</comment>
<comment type="subunit">
    <text evidence="1">Homodimer.</text>
</comment>
<comment type="similarity">
    <text evidence="1">Belongs to the TPP enzyme family. MenD subfamily.</text>
</comment>
<organism>
    <name type="scientific">Listeria monocytogenes serovar 1/2a (strain ATCC BAA-679 / EGD-e)</name>
    <dbReference type="NCBI Taxonomy" id="169963"/>
    <lineage>
        <taxon>Bacteria</taxon>
        <taxon>Bacillati</taxon>
        <taxon>Bacillota</taxon>
        <taxon>Bacilli</taxon>
        <taxon>Bacillales</taxon>
        <taxon>Listeriaceae</taxon>
        <taxon>Listeria</taxon>
    </lineage>
</organism>
<feature type="chain" id="PRO_0000341768" description="2-succinyl-5-enolpyruvyl-6-hydroxy-3-cyclohexene-1-carboxylate synthase">
    <location>
        <begin position="1"/>
        <end position="580"/>
    </location>
</feature>
<proteinExistence type="inferred from homology"/>
<reference key="1">
    <citation type="journal article" date="2001" name="Science">
        <title>Comparative genomics of Listeria species.</title>
        <authorList>
            <person name="Glaser P."/>
            <person name="Frangeul L."/>
            <person name="Buchrieser C."/>
            <person name="Rusniok C."/>
            <person name="Amend A."/>
            <person name="Baquero F."/>
            <person name="Berche P."/>
            <person name="Bloecker H."/>
            <person name="Brandt P."/>
            <person name="Chakraborty T."/>
            <person name="Charbit A."/>
            <person name="Chetouani F."/>
            <person name="Couve E."/>
            <person name="de Daruvar A."/>
            <person name="Dehoux P."/>
            <person name="Domann E."/>
            <person name="Dominguez-Bernal G."/>
            <person name="Duchaud E."/>
            <person name="Durant L."/>
            <person name="Dussurget O."/>
            <person name="Entian K.-D."/>
            <person name="Fsihi H."/>
            <person name="Garcia-del Portillo F."/>
            <person name="Garrido P."/>
            <person name="Gautier L."/>
            <person name="Goebel W."/>
            <person name="Gomez-Lopez N."/>
            <person name="Hain T."/>
            <person name="Hauf J."/>
            <person name="Jackson D."/>
            <person name="Jones L.-M."/>
            <person name="Kaerst U."/>
            <person name="Kreft J."/>
            <person name="Kuhn M."/>
            <person name="Kunst F."/>
            <person name="Kurapkat G."/>
            <person name="Madueno E."/>
            <person name="Maitournam A."/>
            <person name="Mata Vicente J."/>
            <person name="Ng E."/>
            <person name="Nedjari H."/>
            <person name="Nordsiek G."/>
            <person name="Novella S."/>
            <person name="de Pablos B."/>
            <person name="Perez-Diaz J.-C."/>
            <person name="Purcell R."/>
            <person name="Remmel B."/>
            <person name="Rose M."/>
            <person name="Schlueter T."/>
            <person name="Simoes N."/>
            <person name="Tierrez A."/>
            <person name="Vazquez-Boland J.-A."/>
            <person name="Voss H."/>
            <person name="Wehland J."/>
            <person name="Cossart P."/>
        </authorList>
    </citation>
    <scope>NUCLEOTIDE SEQUENCE [LARGE SCALE GENOMIC DNA]</scope>
    <source>
        <strain>ATCC BAA-679 / EGD-e</strain>
    </source>
</reference>
<protein>
    <recommendedName>
        <fullName evidence="1">2-succinyl-5-enolpyruvyl-6-hydroxy-3-cyclohexene-1-carboxylate synthase</fullName>
        <shortName evidence="1">SEPHCHC synthase</shortName>
        <ecNumber evidence="1">2.2.1.9</ecNumber>
    </recommendedName>
    <alternativeName>
        <fullName evidence="1">Menaquinone biosynthesis protein MenD</fullName>
    </alternativeName>
</protein>
<name>MEND_LISMO</name>
<keyword id="KW-0460">Magnesium</keyword>
<keyword id="KW-0464">Manganese</keyword>
<keyword id="KW-0474">Menaquinone biosynthesis</keyword>
<keyword id="KW-0479">Metal-binding</keyword>
<keyword id="KW-1185">Reference proteome</keyword>
<keyword id="KW-0786">Thiamine pyrophosphate</keyword>
<keyword id="KW-0808">Transferase</keyword>
<evidence type="ECO:0000255" key="1">
    <source>
        <dbReference type="HAMAP-Rule" id="MF_01659"/>
    </source>
</evidence>
<accession>Q8Y6K9</accession>
<gene>
    <name evidence="1" type="primary">menD</name>
    <name type="ordered locus">lmo1675</name>
</gene>